<sequence>MIQLSERQQDLLQVAEKYEQCHIEFYTAQSRLFGTEIMGEVVKTSLGTLKIAHPEEDLFEVALAYLASKKDILTAQERKDVLFYIQNNLC</sequence>
<organismHost>
    <name type="scientific">Bacillus subtilis</name>
    <dbReference type="NCBI Taxonomy" id="1423"/>
</organismHost>
<proteinExistence type="predicted"/>
<name>GP43_BPSP1</name>
<dbReference type="EMBL" id="L20825">
    <property type="protein sequence ID" value="AAA16198.1"/>
    <property type="molecule type" value="Unassigned_DNA"/>
</dbReference>
<dbReference type="EMBL" id="AF031901">
    <property type="protein sequence ID" value="AAC29012.1"/>
    <property type="molecule type" value="Genomic_DNA"/>
</dbReference>
<dbReference type="PIR" id="A49908">
    <property type="entry name" value="A49908"/>
</dbReference>
<dbReference type="RefSeq" id="YP_002300287.1">
    <property type="nucleotide sequence ID" value="NC_011421.1"/>
</dbReference>
<dbReference type="GeneID" id="7009000"/>
<dbReference type="KEGG" id="vg:7009000"/>
<organism>
    <name type="scientific">Bacillus phage SP01</name>
    <name type="common">Bacteriophage SP01</name>
    <dbReference type="NCBI Taxonomy" id="2884427"/>
    <lineage>
        <taxon>Viruses</taxon>
        <taxon>Duplodnaviria</taxon>
        <taxon>Heunggongvirae</taxon>
        <taxon>Uroviricota</taxon>
        <taxon>Caudoviricetes</taxon>
        <taxon>Herelleviridae</taxon>
        <taxon>Spounavirinae</taxon>
        <taxon>Okubovirus</taxon>
        <taxon>Okubovirus SPO1</taxon>
    </lineage>
</organism>
<reference key="1">
    <citation type="journal article" date="1993" name="J. Bacteriol.">
        <title>A cytotoxic early gene of Bacillus subtilis bacteriophage SPO1.</title>
        <authorList>
            <person name="Wei P."/>
            <person name="Stewart C.R."/>
        </authorList>
    </citation>
    <scope>NUCLEOTIDE SEQUENCE</scope>
</reference>
<reference key="2">
    <citation type="journal article" date="1998" name="Virology">
        <title>Genes and regulatory sites of the 'host-takeover module' in the terminal redundancy of Bacillus subtilis bacteriophage SPO1.</title>
        <authorList>
            <person name="Stewart C.R."/>
            <person name="Gaslightwala I."/>
            <person name="Hinata K."/>
            <person name="Krolikowski K.A."/>
            <person name="Needleman D.S."/>
            <person name="Peng A.S.-Y."/>
            <person name="Peterman M.A."/>
            <person name="Tobias A."/>
            <person name="Wei P."/>
        </authorList>
    </citation>
    <scope>NUCLEOTIDE SEQUENCE [GENOMIC DNA]</scope>
</reference>
<accession>Q08401</accession>
<protein>
    <recommendedName>
        <fullName>E22 protein</fullName>
    </recommendedName>
    <alternativeName>
        <fullName>Gene 43 protein</fullName>
    </alternativeName>
</protein>
<feature type="chain" id="PRO_0000106149" description="E22 protein">
    <location>
        <begin position="1"/>
        <end position="90"/>
    </location>
</feature>
<gene>
    <name type="primary">43</name>
</gene>